<accession>Q8YEM5</accession>
<feature type="chain" id="PRO_0000092174" description="Cytochrome c biogenesis ATP-binding export protein CcmA">
    <location>
        <begin position="1"/>
        <end position="215"/>
    </location>
</feature>
<feature type="domain" description="ABC transporter" evidence="1">
    <location>
        <begin position="3"/>
        <end position="215"/>
    </location>
</feature>
<feature type="binding site" evidence="1">
    <location>
        <begin position="35"/>
        <end position="42"/>
    </location>
    <ligand>
        <name>ATP</name>
        <dbReference type="ChEBI" id="CHEBI:30616"/>
    </ligand>
</feature>
<proteinExistence type="inferred from homology"/>
<reference key="1">
    <citation type="journal article" date="2002" name="Proc. Natl. Acad. Sci. U.S.A.">
        <title>The genome sequence of the facultative intracellular pathogen Brucella melitensis.</title>
        <authorList>
            <person name="DelVecchio V.G."/>
            <person name="Kapatral V."/>
            <person name="Redkar R.J."/>
            <person name="Patra G."/>
            <person name="Mujer C."/>
            <person name="Los T."/>
            <person name="Ivanova N."/>
            <person name="Anderson I."/>
            <person name="Bhattacharyya A."/>
            <person name="Lykidis A."/>
            <person name="Reznik G."/>
            <person name="Jablonski L."/>
            <person name="Larsen N."/>
            <person name="D'Souza M."/>
            <person name="Bernal A."/>
            <person name="Mazur M."/>
            <person name="Goltsman E."/>
            <person name="Selkov E."/>
            <person name="Elzer P.H."/>
            <person name="Hagius S."/>
            <person name="O'Callaghan D."/>
            <person name="Letesson J.-J."/>
            <person name="Haselkorn R."/>
            <person name="Kyrpides N.C."/>
            <person name="Overbeek R."/>
        </authorList>
    </citation>
    <scope>NUCLEOTIDE SEQUENCE [LARGE SCALE GENOMIC DNA]</scope>
    <source>
        <strain>ATCC 23456 / CCUG 17765 / NCTC 10094 / 16M</strain>
    </source>
</reference>
<gene>
    <name evidence="1" type="primary">ccmA</name>
    <name type="ordered locus">BMEI1853</name>
</gene>
<dbReference type="EC" id="7.6.2.5" evidence="1"/>
<dbReference type="EMBL" id="AE008917">
    <property type="protein sequence ID" value="AAL53034.1"/>
    <property type="status" value="ALT_INIT"/>
    <property type="molecule type" value="Genomic_DNA"/>
</dbReference>
<dbReference type="PIR" id="AG3483">
    <property type="entry name" value="AG3483"/>
</dbReference>
<dbReference type="RefSeq" id="WP_004684645.1">
    <property type="nucleotide sequence ID" value="NZ_GG703778.1"/>
</dbReference>
<dbReference type="SMR" id="Q8YEM5"/>
<dbReference type="GeneID" id="29594737"/>
<dbReference type="KEGG" id="bme:BMEI1853"/>
<dbReference type="KEGG" id="bmel:DK63_1636"/>
<dbReference type="PATRIC" id="fig|224914.52.peg.1727"/>
<dbReference type="eggNOG" id="COG4133">
    <property type="taxonomic scope" value="Bacteria"/>
</dbReference>
<dbReference type="PhylomeDB" id="Q8YEM5"/>
<dbReference type="Proteomes" id="UP000000419">
    <property type="component" value="Chromosome I"/>
</dbReference>
<dbReference type="GO" id="GO:0005886">
    <property type="term" value="C:plasma membrane"/>
    <property type="evidence" value="ECO:0007669"/>
    <property type="project" value="UniProtKB-SubCell"/>
</dbReference>
<dbReference type="GO" id="GO:0015439">
    <property type="term" value="F:ABC-type heme transporter activity"/>
    <property type="evidence" value="ECO:0007669"/>
    <property type="project" value="UniProtKB-EC"/>
</dbReference>
<dbReference type="GO" id="GO:0005524">
    <property type="term" value="F:ATP binding"/>
    <property type="evidence" value="ECO:0007669"/>
    <property type="project" value="UniProtKB-KW"/>
</dbReference>
<dbReference type="GO" id="GO:0016887">
    <property type="term" value="F:ATP hydrolysis activity"/>
    <property type="evidence" value="ECO:0007669"/>
    <property type="project" value="InterPro"/>
</dbReference>
<dbReference type="GO" id="GO:0017004">
    <property type="term" value="P:cytochrome complex assembly"/>
    <property type="evidence" value="ECO:0007669"/>
    <property type="project" value="UniProtKB-KW"/>
</dbReference>
<dbReference type="CDD" id="cd03231">
    <property type="entry name" value="ABC_CcmA_heme_exporter"/>
    <property type="match status" value="1"/>
</dbReference>
<dbReference type="Gene3D" id="3.40.50.300">
    <property type="entry name" value="P-loop containing nucleotide triphosphate hydrolases"/>
    <property type="match status" value="1"/>
</dbReference>
<dbReference type="InterPro" id="IPR003593">
    <property type="entry name" value="AAA+_ATPase"/>
</dbReference>
<dbReference type="InterPro" id="IPR003439">
    <property type="entry name" value="ABC_transporter-like_ATP-bd"/>
</dbReference>
<dbReference type="InterPro" id="IPR005895">
    <property type="entry name" value="ABC_transptr_haem_export_CcmA"/>
</dbReference>
<dbReference type="InterPro" id="IPR027417">
    <property type="entry name" value="P-loop_NTPase"/>
</dbReference>
<dbReference type="NCBIfam" id="TIGR01189">
    <property type="entry name" value="ccmA"/>
    <property type="match status" value="1"/>
</dbReference>
<dbReference type="PANTHER" id="PTHR43499">
    <property type="entry name" value="ABC TRANSPORTER I FAMILY MEMBER 1"/>
    <property type="match status" value="1"/>
</dbReference>
<dbReference type="PANTHER" id="PTHR43499:SF1">
    <property type="entry name" value="ABC TRANSPORTER I FAMILY MEMBER 1"/>
    <property type="match status" value="1"/>
</dbReference>
<dbReference type="Pfam" id="PF00005">
    <property type="entry name" value="ABC_tran"/>
    <property type="match status" value="1"/>
</dbReference>
<dbReference type="SMART" id="SM00382">
    <property type="entry name" value="AAA"/>
    <property type="match status" value="1"/>
</dbReference>
<dbReference type="SUPFAM" id="SSF52540">
    <property type="entry name" value="P-loop containing nucleoside triphosphate hydrolases"/>
    <property type="match status" value="1"/>
</dbReference>
<dbReference type="PROSITE" id="PS50893">
    <property type="entry name" value="ABC_TRANSPORTER_2"/>
    <property type="match status" value="1"/>
</dbReference>
<dbReference type="PROSITE" id="PS51243">
    <property type="entry name" value="CCMA"/>
    <property type="match status" value="1"/>
</dbReference>
<keyword id="KW-0067">ATP-binding</keyword>
<keyword id="KW-0997">Cell inner membrane</keyword>
<keyword id="KW-1003">Cell membrane</keyword>
<keyword id="KW-0201">Cytochrome c-type biogenesis</keyword>
<keyword id="KW-0472">Membrane</keyword>
<keyword id="KW-0547">Nucleotide-binding</keyword>
<keyword id="KW-1278">Translocase</keyword>
<keyword id="KW-0813">Transport</keyword>
<organism>
    <name type="scientific">Brucella melitensis biotype 1 (strain ATCC 23456 / CCUG 17765 / NCTC 10094 / 16M)</name>
    <dbReference type="NCBI Taxonomy" id="224914"/>
    <lineage>
        <taxon>Bacteria</taxon>
        <taxon>Pseudomonadati</taxon>
        <taxon>Pseudomonadota</taxon>
        <taxon>Alphaproteobacteria</taxon>
        <taxon>Hyphomicrobiales</taxon>
        <taxon>Brucellaceae</taxon>
        <taxon>Brucella/Ochrobactrum group</taxon>
        <taxon>Brucella</taxon>
    </lineage>
</organism>
<comment type="function">
    <text evidence="1">Part of the ABC transporter complex CcmAB involved in the biogenesis of c-type cytochromes; once thought to export heme, this seems not to be the case, but its exact role is uncertain. Responsible for energy coupling to the transport system.</text>
</comment>
<comment type="catalytic activity">
    <reaction evidence="1">
        <text>heme b(in) + ATP + H2O = heme b(out) + ADP + phosphate + H(+)</text>
        <dbReference type="Rhea" id="RHEA:19261"/>
        <dbReference type="ChEBI" id="CHEBI:15377"/>
        <dbReference type="ChEBI" id="CHEBI:15378"/>
        <dbReference type="ChEBI" id="CHEBI:30616"/>
        <dbReference type="ChEBI" id="CHEBI:43474"/>
        <dbReference type="ChEBI" id="CHEBI:60344"/>
        <dbReference type="ChEBI" id="CHEBI:456216"/>
        <dbReference type="EC" id="7.6.2.5"/>
    </reaction>
</comment>
<comment type="subunit">
    <text evidence="1">The complex is composed of two ATP-binding proteins (CcmA) and two transmembrane proteins (CcmB).</text>
</comment>
<comment type="subcellular location">
    <subcellularLocation>
        <location evidence="1">Cell inner membrane</location>
        <topology evidence="1">Peripheral membrane protein</topology>
    </subcellularLocation>
</comment>
<comment type="similarity">
    <text evidence="1">Belongs to the ABC transporter superfamily. CcmA exporter (TC 3.A.1.107) family.</text>
</comment>
<comment type="sequence caution" evidence="2">
    <conflict type="erroneous initiation">
        <sequence resource="EMBL-CDS" id="AAL53034"/>
    </conflict>
</comment>
<evidence type="ECO:0000255" key="1">
    <source>
        <dbReference type="HAMAP-Rule" id="MF_01707"/>
    </source>
</evidence>
<evidence type="ECO:0000305" key="2"/>
<name>CCMA_BRUME</name>
<sequence length="215" mass="22908">MRLEAENLAGERGGETIFSHLSFTIGTGQALVVTGPNGSGKSTLLRIICGLLAPEAGEVKLTEGTQIVPVRAACHYLGHQNAMKPALSVRENLLFWQKFNGGEALDIGAALEAVDLAGVEHLPFGYLSTGQKRRVSIAKLLVSHRPLWIVDEPTAGLDKASEARFAELMREHMRQDGMIIAATHIPLGLDGAISTTGNGLVRSLDMAAFSVEDIA</sequence>
<protein>
    <recommendedName>
        <fullName evidence="1">Cytochrome c biogenesis ATP-binding export protein CcmA</fullName>
        <ecNumber evidence="1">7.6.2.5</ecNumber>
    </recommendedName>
    <alternativeName>
        <fullName evidence="1">Heme exporter protein A</fullName>
    </alternativeName>
</protein>